<protein>
    <recommendedName>
        <fullName>Transcription initiation factor IIE subunit beta</fullName>
        <shortName>TFIIE-beta</shortName>
    </recommendedName>
    <alternativeName>
        <fullName>Factor A 43 kDa subunit</fullName>
    </alternativeName>
    <alternativeName>
        <fullName>Transcription factor A small subunit</fullName>
    </alternativeName>
</protein>
<reference key="1">
    <citation type="journal article" date="1994" name="J. Biol. Chem.">
        <title>Yeast TFIIE. Cloning, expression, and homology to vertebrate proteins.</title>
        <authorList>
            <person name="Feaver W.J."/>
            <person name="Henry N.L."/>
            <person name="Bushnell D.A."/>
            <person name="Sayre M.H."/>
            <person name="Brickner J.H."/>
            <person name="Gileadi O."/>
            <person name="Kornberg R.D."/>
        </authorList>
    </citation>
    <scope>NUCLEOTIDE SEQUENCE [GENOMIC DNA]</scope>
    <scope>PROTEIN SEQUENCE OF 180-194 AND 254-276</scope>
    <scope>SUBUNIT</scope>
    <source>
        <strain>ATCC 208279 / BJ926</strain>
    </source>
</reference>
<reference key="2">
    <citation type="journal article" date="1994" name="Nature">
        <title>Complete DNA sequence of yeast chromosome XI.</title>
        <authorList>
            <person name="Dujon B."/>
            <person name="Alexandraki D."/>
            <person name="Andre B."/>
            <person name="Ansorge W."/>
            <person name="Baladron V."/>
            <person name="Ballesta J.P.G."/>
            <person name="Banrevi A."/>
            <person name="Bolle P.-A."/>
            <person name="Bolotin-Fukuhara M."/>
            <person name="Bossier P."/>
            <person name="Bou G."/>
            <person name="Boyer J."/>
            <person name="Buitrago M.J."/>
            <person name="Cheret G."/>
            <person name="Colleaux L."/>
            <person name="Daignan-Fornier B."/>
            <person name="del Rey F."/>
            <person name="Dion C."/>
            <person name="Domdey H."/>
            <person name="Duesterhoeft A."/>
            <person name="Duesterhus S."/>
            <person name="Entian K.-D."/>
            <person name="Erfle H."/>
            <person name="Esteban P.F."/>
            <person name="Feldmann H."/>
            <person name="Fernandes L."/>
            <person name="Fobo G.M."/>
            <person name="Fritz C."/>
            <person name="Fukuhara H."/>
            <person name="Gabel C."/>
            <person name="Gaillon L."/>
            <person name="Garcia-Cantalejo J.M."/>
            <person name="Garcia-Ramirez J.J."/>
            <person name="Gent M.E."/>
            <person name="Ghazvini M."/>
            <person name="Goffeau A."/>
            <person name="Gonzalez A."/>
            <person name="Grothues D."/>
            <person name="Guerreiro P."/>
            <person name="Hegemann J.H."/>
            <person name="Hewitt N."/>
            <person name="Hilger F."/>
            <person name="Hollenberg C.P."/>
            <person name="Horaitis O."/>
            <person name="Indge K.J."/>
            <person name="Jacquier A."/>
            <person name="James C.M."/>
            <person name="Jauniaux J.-C."/>
            <person name="Jimenez A."/>
            <person name="Keuchel H."/>
            <person name="Kirchrath L."/>
            <person name="Kleine K."/>
            <person name="Koetter P."/>
            <person name="Legrain P."/>
            <person name="Liebl S."/>
            <person name="Louis E.J."/>
            <person name="Maia e Silva A."/>
            <person name="Marck C."/>
            <person name="Monnier A.-L."/>
            <person name="Moestl D."/>
            <person name="Mueller S."/>
            <person name="Obermaier B."/>
            <person name="Oliver S.G."/>
            <person name="Pallier C."/>
            <person name="Pascolo S."/>
            <person name="Pfeiffer F."/>
            <person name="Philippsen P."/>
            <person name="Planta R.J."/>
            <person name="Pohl F.M."/>
            <person name="Pohl T.M."/>
            <person name="Poehlmann R."/>
            <person name="Portetelle D."/>
            <person name="Purnelle B."/>
            <person name="Puzos V."/>
            <person name="Ramezani Rad M."/>
            <person name="Rasmussen S.W."/>
            <person name="Remacha M.A."/>
            <person name="Revuelta J.L."/>
            <person name="Richard G.-F."/>
            <person name="Rieger M."/>
            <person name="Rodrigues-Pousada C."/>
            <person name="Rose M."/>
            <person name="Rupp T."/>
            <person name="Santos M.A."/>
            <person name="Schwager C."/>
            <person name="Sensen C."/>
            <person name="Skala J."/>
            <person name="Soares H."/>
            <person name="Sor F."/>
            <person name="Stegemann J."/>
            <person name="Tettelin H."/>
            <person name="Thierry A."/>
            <person name="Tzermia M."/>
            <person name="Urrestarazu L.A."/>
            <person name="van Dyck L."/>
            <person name="van Vliet-Reedijk J.C."/>
            <person name="Valens M."/>
            <person name="Vandenbol M."/>
            <person name="Vilela C."/>
            <person name="Vissers S."/>
            <person name="von Wettstein D."/>
            <person name="Voss H."/>
            <person name="Wiemann S."/>
            <person name="Xu G."/>
            <person name="Zimmermann J."/>
            <person name="Haasemann M."/>
            <person name="Becker I."/>
            <person name="Mewes H.-W."/>
        </authorList>
    </citation>
    <scope>NUCLEOTIDE SEQUENCE [LARGE SCALE GENOMIC DNA]</scope>
    <source>
        <strain>ATCC 204508 / S288c</strain>
    </source>
</reference>
<reference key="3">
    <citation type="journal article" date="2014" name="G3 (Bethesda)">
        <title>The reference genome sequence of Saccharomyces cerevisiae: Then and now.</title>
        <authorList>
            <person name="Engel S.R."/>
            <person name="Dietrich F.S."/>
            <person name="Fisk D.G."/>
            <person name="Binkley G."/>
            <person name="Balakrishnan R."/>
            <person name="Costanzo M.C."/>
            <person name="Dwight S.S."/>
            <person name="Hitz B.C."/>
            <person name="Karra K."/>
            <person name="Nash R.S."/>
            <person name="Weng S."/>
            <person name="Wong E.D."/>
            <person name="Lloyd P."/>
            <person name="Skrzypek M.S."/>
            <person name="Miyasato S.R."/>
            <person name="Simison M."/>
            <person name="Cherry J.M."/>
        </authorList>
    </citation>
    <scope>GENOME REANNOTATION</scope>
    <source>
        <strain>ATCC 204508 / S288c</strain>
    </source>
</reference>
<reference key="4">
    <citation type="journal article" date="2003" name="Nature">
        <title>Global analysis of protein expression in yeast.</title>
        <authorList>
            <person name="Ghaemmaghami S."/>
            <person name="Huh W.-K."/>
            <person name="Bower K."/>
            <person name="Howson R.W."/>
            <person name="Belle A."/>
            <person name="Dephoure N."/>
            <person name="O'Shea E.K."/>
            <person name="Weissman J.S."/>
        </authorList>
    </citation>
    <scope>LEVEL OF PROTEIN EXPRESSION [LARGE SCALE ANALYSIS]</scope>
</reference>
<reference key="5">
    <citation type="journal article" date="2007" name="Proc. Natl. Acad. Sci. U.S.A.">
        <title>Analysis of phosphorylation sites on proteins from Saccharomyces cerevisiae by electron transfer dissociation (ETD) mass spectrometry.</title>
        <authorList>
            <person name="Chi A."/>
            <person name="Huttenhower C."/>
            <person name="Geer L.Y."/>
            <person name="Coon J.J."/>
            <person name="Syka J.E.P."/>
            <person name="Bai D.L."/>
            <person name="Shabanowitz J."/>
            <person name="Burke D.J."/>
            <person name="Troyanskaya O.G."/>
            <person name="Hunt D.F."/>
        </authorList>
    </citation>
    <scope>PHOSPHORYLATION [LARGE SCALE ANALYSIS] AT SER-52</scope>
    <scope>IDENTIFICATION BY MASS SPECTROMETRY [LARGE SCALE ANALYSIS]</scope>
</reference>
<reference key="6">
    <citation type="journal article" date="2008" name="Mol. Cell. Proteomics">
        <title>A multidimensional chromatography technology for in-depth phosphoproteome analysis.</title>
        <authorList>
            <person name="Albuquerque C.P."/>
            <person name="Smolka M.B."/>
            <person name="Payne S.H."/>
            <person name="Bafna V."/>
            <person name="Eng J."/>
            <person name="Zhou H."/>
        </authorList>
    </citation>
    <scope>PHOSPHORYLATION [LARGE SCALE ANALYSIS] AT SER-106</scope>
    <scope>IDENTIFICATION BY MASS SPECTROMETRY [LARGE SCALE ANALYSIS]</scope>
</reference>
<reference key="7">
    <citation type="journal article" date="2009" name="Science">
        <title>Global analysis of Cdk1 substrate phosphorylation sites provides insights into evolution.</title>
        <authorList>
            <person name="Holt L.J."/>
            <person name="Tuch B.B."/>
            <person name="Villen J."/>
            <person name="Johnson A.D."/>
            <person name="Gygi S.P."/>
            <person name="Morgan D.O."/>
        </authorList>
    </citation>
    <scope>PHOSPHORYLATION [LARGE SCALE ANALYSIS] AT SER-97</scope>
    <scope>IDENTIFICATION BY MASS SPECTROMETRY [LARGE SCALE ANALYSIS]</scope>
</reference>
<comment type="function">
    <text evidence="1">Recruits TFIIH to the initiation complex and stimulates the RNA polymerase II C-terminal domain kinase and DNA-dependent ATPase activities of TFIIH. Both TFIIH and TFIIE are required for promoter clearance by RNA polymerase (By similarity).</text>
</comment>
<comment type="subunit">
    <text evidence="1">TFIIE is a tetramer of two alpha (TFA1) and two beta (TFA2) subunits.</text>
</comment>
<comment type="interaction">
    <interactant intactId="EBI-18907">
        <id>P36145</id>
    </interactant>
    <interactant intactId="EBI-18903">
        <id>P36100</id>
        <label>TFA1</label>
    </interactant>
    <organismsDiffer>false</organismsDiffer>
    <experiments>3</experiments>
</comment>
<comment type="subcellular location">
    <subcellularLocation>
        <location evidence="5">Nucleus</location>
    </subcellularLocation>
</comment>
<comment type="miscellaneous">
    <text evidence="4">Present with 1150 molecules/cell in log phase SD medium.</text>
</comment>
<comment type="similarity">
    <text evidence="2">Belongs to the TFIIE beta subunit family.</text>
</comment>
<evidence type="ECO:0000250" key="1"/>
<evidence type="ECO:0000255" key="2">
    <source>
        <dbReference type="PROSITE-ProRule" id="PRU00682"/>
    </source>
</evidence>
<evidence type="ECO:0000256" key="3">
    <source>
        <dbReference type="SAM" id="MobiDB-lite"/>
    </source>
</evidence>
<evidence type="ECO:0000269" key="4">
    <source>
    </source>
</evidence>
<evidence type="ECO:0000305" key="5"/>
<evidence type="ECO:0007744" key="6">
    <source>
    </source>
</evidence>
<evidence type="ECO:0007744" key="7">
    <source>
    </source>
</evidence>
<evidence type="ECO:0007744" key="8">
    <source>
    </source>
</evidence>
<evidence type="ECO:0007829" key="9">
    <source>
        <dbReference type="PDB" id="7ML0"/>
    </source>
</evidence>
<evidence type="ECO:0007829" key="10">
    <source>
        <dbReference type="PDB" id="7ML4"/>
    </source>
</evidence>
<evidence type="ECO:0007829" key="11">
    <source>
        <dbReference type="PDB" id="7O4I"/>
    </source>
</evidence>
<evidence type="ECO:0007829" key="12">
    <source>
        <dbReference type="PDB" id="7O4J"/>
    </source>
</evidence>
<evidence type="ECO:0007829" key="13">
    <source>
        <dbReference type="PDB" id="7ZS9"/>
    </source>
</evidence>
<gene>
    <name type="primary">TFA2</name>
    <name type="ordered locus">YKR062W</name>
</gene>
<name>T2EB_YEAST</name>
<feature type="chain" id="PRO_0000211230" description="Transcription initiation factor IIE subunit beta">
    <location>
        <begin position="1"/>
        <end position="328"/>
    </location>
</feature>
<feature type="DNA-binding region" description="TFIIE beta" evidence="2">
    <location>
        <begin position="113"/>
        <end position="187"/>
    </location>
</feature>
<feature type="region of interest" description="Disordered" evidence="3">
    <location>
        <begin position="32"/>
        <end position="105"/>
    </location>
</feature>
<feature type="compositionally biased region" description="Acidic residues" evidence="3">
    <location>
        <begin position="85"/>
        <end position="94"/>
    </location>
</feature>
<feature type="modified residue" description="Phosphoserine" evidence="6">
    <location>
        <position position="52"/>
    </location>
</feature>
<feature type="modified residue" description="Phosphoserine" evidence="8">
    <location>
        <position position="97"/>
    </location>
</feature>
<feature type="modified residue" description="Phosphoserine" evidence="7">
    <location>
        <position position="106"/>
    </location>
</feature>
<feature type="sequence conflict" description="In Ref. 1; AAA62664." evidence="5" ref="1">
    <original>S</original>
    <variation>R</variation>
    <location>
        <position position="248"/>
    </location>
</feature>
<feature type="strand" evidence="11">
    <location>
        <begin position="104"/>
        <end position="106"/>
    </location>
</feature>
<feature type="helix" evidence="12">
    <location>
        <begin position="107"/>
        <end position="115"/>
    </location>
</feature>
<feature type="helix" evidence="12">
    <location>
        <begin position="124"/>
        <end position="136"/>
    </location>
</feature>
<feature type="strand" evidence="13">
    <location>
        <begin position="138"/>
        <end position="140"/>
    </location>
</feature>
<feature type="helix" evidence="12">
    <location>
        <begin position="144"/>
        <end position="150"/>
    </location>
</feature>
<feature type="strand" evidence="9">
    <location>
        <begin position="151"/>
        <end position="153"/>
    </location>
</feature>
<feature type="helix" evidence="12">
    <location>
        <begin position="158"/>
        <end position="165"/>
    </location>
</feature>
<feature type="strand" evidence="12">
    <location>
        <begin position="166"/>
        <end position="172"/>
    </location>
</feature>
<feature type="turn" evidence="12">
    <location>
        <begin position="173"/>
        <end position="176"/>
    </location>
</feature>
<feature type="strand" evidence="12">
    <location>
        <begin position="177"/>
        <end position="180"/>
    </location>
</feature>
<feature type="helix" evidence="12">
    <location>
        <begin position="189"/>
        <end position="197"/>
    </location>
</feature>
<feature type="strand" evidence="12">
    <location>
        <begin position="200"/>
        <end position="202"/>
    </location>
</feature>
<feature type="helix" evidence="12">
    <location>
        <begin position="207"/>
        <end position="211"/>
    </location>
</feature>
<feature type="strand" evidence="10">
    <location>
        <begin position="213"/>
        <end position="215"/>
    </location>
</feature>
<feature type="helix" evidence="12">
    <location>
        <begin position="218"/>
        <end position="227"/>
    </location>
</feature>
<feature type="strand" evidence="12">
    <location>
        <begin position="229"/>
        <end position="234"/>
    </location>
</feature>
<feature type="strand" evidence="12">
    <location>
        <begin position="236"/>
        <end position="238"/>
    </location>
</feature>
<feature type="strand" evidence="12">
    <location>
        <begin position="241"/>
        <end position="246"/>
    </location>
</feature>
<feature type="helix" evidence="12">
    <location>
        <begin position="257"/>
        <end position="265"/>
    </location>
</feature>
<feature type="helix" evidence="12">
    <location>
        <begin position="271"/>
        <end position="273"/>
    </location>
</feature>
<feature type="helix" evidence="12">
    <location>
        <begin position="274"/>
        <end position="280"/>
    </location>
</feature>
<feature type="helix" evidence="12">
    <location>
        <begin position="290"/>
        <end position="292"/>
    </location>
</feature>
<feature type="turn" evidence="12">
    <location>
        <begin position="316"/>
        <end position="320"/>
    </location>
</feature>
<sequence>MSKNRDPLLANLNAFKSKVKSAPVIAPAKVGQKKTNDTVITIDGNTRKRTASERAQENTLNSAKNPVLVDIKKEAGSNSSNAISLDDDDDDEDFGSSPSKKVRPGSIAAAALQANQTDISKSHDSSKLLWATEYIQKKGKPVLVNELLDYLSMKKDDKVIELLKKLDRIEFDPKKGTFKYLSTYDVHSPSELLKLLRSQVTFKGISCKDLKDGWPQCDETINQLEEDSKILVLRTKKDKTPRYVWYNSGGNLKCIDEEFVKMWENVQLPQFAELPRKLQDLGLKPASVDPATIKRQTKRVEVKKKRQRKGKITNTHMTGILKDYSHRV</sequence>
<proteinExistence type="evidence at protein level"/>
<accession>P36145</accession>
<accession>D6VXC3</accession>
<accession>P42569</accession>
<dbReference type="EMBL" id="U12824">
    <property type="protein sequence ID" value="AAA62664.1"/>
    <property type="molecule type" value="Genomic_DNA"/>
</dbReference>
<dbReference type="EMBL" id="Z28287">
    <property type="protein sequence ID" value="CAA82141.1"/>
    <property type="molecule type" value="Genomic_DNA"/>
</dbReference>
<dbReference type="EMBL" id="BK006944">
    <property type="protein sequence ID" value="DAA09213.1"/>
    <property type="molecule type" value="Genomic_DNA"/>
</dbReference>
<dbReference type="PIR" id="S38138">
    <property type="entry name" value="S38138"/>
</dbReference>
<dbReference type="RefSeq" id="NP_012988.1">
    <property type="nucleotide sequence ID" value="NM_001179852.1"/>
</dbReference>
<dbReference type="PDB" id="5FMF">
    <property type="method" value="EM"/>
    <property type="resolution" value="6.00 A"/>
    <property type="chains" value="S=125-247"/>
</dbReference>
<dbReference type="PDB" id="5FYW">
    <property type="method" value="EM"/>
    <property type="resolution" value="4.35 A"/>
    <property type="chains" value="X=1-328"/>
</dbReference>
<dbReference type="PDB" id="5FZ5">
    <property type="method" value="EM"/>
    <property type="resolution" value="8.80 A"/>
    <property type="chains" value="X=1-328"/>
</dbReference>
<dbReference type="PDB" id="5OQJ">
    <property type="method" value="EM"/>
    <property type="resolution" value="4.70 A"/>
    <property type="chains" value="X=1-328"/>
</dbReference>
<dbReference type="PDB" id="5OQM">
    <property type="method" value="EM"/>
    <property type="resolution" value="5.80 A"/>
    <property type="chains" value="X=1-328"/>
</dbReference>
<dbReference type="PDB" id="5SVA">
    <property type="method" value="EM"/>
    <property type="resolution" value="15.30 A"/>
    <property type="chains" value="i=1-328"/>
</dbReference>
<dbReference type="PDB" id="6GYL">
    <property type="method" value="EM"/>
    <property type="resolution" value="4.80 A"/>
    <property type="chains" value="X=1-328"/>
</dbReference>
<dbReference type="PDB" id="6GYM">
    <property type="method" value="EM"/>
    <property type="resolution" value="6.70 A"/>
    <property type="chains" value="X=1-328"/>
</dbReference>
<dbReference type="PDB" id="7ML0">
    <property type="method" value="EM"/>
    <property type="resolution" value="3.00 A"/>
    <property type="chains" value="X=1-328"/>
</dbReference>
<dbReference type="PDB" id="7ML1">
    <property type="method" value="EM"/>
    <property type="resolution" value="4.00 A"/>
    <property type="chains" value="X=1-328"/>
</dbReference>
<dbReference type="PDB" id="7ML2">
    <property type="method" value="EM"/>
    <property type="resolution" value="3.40 A"/>
    <property type="chains" value="X=1-328"/>
</dbReference>
<dbReference type="PDB" id="7ML4">
    <property type="method" value="EM"/>
    <property type="resolution" value="3.10 A"/>
    <property type="chains" value="X=1-328"/>
</dbReference>
<dbReference type="PDB" id="7O4I">
    <property type="method" value="EM"/>
    <property type="resolution" value="3.20 A"/>
    <property type="chains" value="X=1-328"/>
</dbReference>
<dbReference type="PDB" id="7O4J">
    <property type="method" value="EM"/>
    <property type="resolution" value="2.90 A"/>
    <property type="chains" value="X=1-328"/>
</dbReference>
<dbReference type="PDB" id="7O4K">
    <property type="method" value="EM"/>
    <property type="resolution" value="3.60 A"/>
    <property type="chains" value="X=1-328"/>
</dbReference>
<dbReference type="PDB" id="7O4L">
    <property type="method" value="EM"/>
    <property type="resolution" value="3.40 A"/>
    <property type="chains" value="X=1-328"/>
</dbReference>
<dbReference type="PDB" id="7O72">
    <property type="method" value="EM"/>
    <property type="resolution" value="3.40 A"/>
    <property type="chains" value="X=1-328"/>
</dbReference>
<dbReference type="PDB" id="7O73">
    <property type="method" value="EM"/>
    <property type="resolution" value="3.40 A"/>
    <property type="chains" value="X=1-328"/>
</dbReference>
<dbReference type="PDB" id="7O75">
    <property type="method" value="EM"/>
    <property type="resolution" value="3.20 A"/>
    <property type="chains" value="X=1-328"/>
</dbReference>
<dbReference type="PDB" id="7ZS9">
    <property type="method" value="EM"/>
    <property type="resolution" value="3.10 A"/>
    <property type="chains" value="X=1-328"/>
</dbReference>
<dbReference type="PDB" id="7ZSA">
    <property type="method" value="EM"/>
    <property type="resolution" value="4.00 A"/>
    <property type="chains" value="X=1-328"/>
</dbReference>
<dbReference type="PDB" id="7ZSB">
    <property type="method" value="EM"/>
    <property type="resolution" value="6.60 A"/>
    <property type="chains" value="X=1-328"/>
</dbReference>
<dbReference type="PDB" id="8CEN">
    <property type="method" value="EM"/>
    <property type="resolution" value="3.00 A"/>
    <property type="chains" value="X=1-328"/>
</dbReference>
<dbReference type="PDB" id="8CEO">
    <property type="method" value="EM"/>
    <property type="resolution" value="3.60 A"/>
    <property type="chains" value="X=1-328"/>
</dbReference>
<dbReference type="PDB" id="8UMH">
    <property type="method" value="EM"/>
    <property type="resolution" value="4.10 A"/>
    <property type="chains" value="X=1-328"/>
</dbReference>
<dbReference type="PDB" id="8UMI">
    <property type="method" value="EM"/>
    <property type="resolution" value="3.70 A"/>
    <property type="chains" value="X=1-328"/>
</dbReference>
<dbReference type="PDB" id="8UOQ">
    <property type="method" value="EM"/>
    <property type="resolution" value="3.80 A"/>
    <property type="chains" value="X=1-328"/>
</dbReference>
<dbReference type="PDB" id="8UOT">
    <property type="method" value="EM"/>
    <property type="resolution" value="3.70 A"/>
    <property type="chains" value="X=1-328"/>
</dbReference>
<dbReference type="PDBsum" id="5FMF"/>
<dbReference type="PDBsum" id="5FYW"/>
<dbReference type="PDBsum" id="5FZ5"/>
<dbReference type="PDBsum" id="5OQJ"/>
<dbReference type="PDBsum" id="5OQM"/>
<dbReference type="PDBsum" id="5SVA"/>
<dbReference type="PDBsum" id="6GYL"/>
<dbReference type="PDBsum" id="6GYM"/>
<dbReference type="PDBsum" id="7ML0"/>
<dbReference type="PDBsum" id="7ML1"/>
<dbReference type="PDBsum" id="7ML2"/>
<dbReference type="PDBsum" id="7ML4"/>
<dbReference type="PDBsum" id="7O4I"/>
<dbReference type="PDBsum" id="7O4J"/>
<dbReference type="PDBsum" id="7O4K"/>
<dbReference type="PDBsum" id="7O4L"/>
<dbReference type="PDBsum" id="7O72"/>
<dbReference type="PDBsum" id="7O73"/>
<dbReference type="PDBsum" id="7O75"/>
<dbReference type="PDBsum" id="7ZS9"/>
<dbReference type="PDBsum" id="7ZSA"/>
<dbReference type="PDBsum" id="7ZSB"/>
<dbReference type="PDBsum" id="8CEN"/>
<dbReference type="PDBsum" id="8CEO"/>
<dbReference type="PDBsum" id="8UMH"/>
<dbReference type="PDBsum" id="8UMI"/>
<dbReference type="PDBsum" id="8UOQ"/>
<dbReference type="PDBsum" id="8UOT"/>
<dbReference type="EMDB" id="EMD-0091"/>
<dbReference type="EMDB" id="EMD-0092"/>
<dbReference type="EMDB" id="EMD-12719"/>
<dbReference type="EMDB" id="EMD-12720"/>
<dbReference type="EMDB" id="EMD-12721"/>
<dbReference type="EMDB" id="EMD-12722"/>
<dbReference type="EMDB" id="EMD-12743"/>
<dbReference type="EMDB" id="EMD-12744"/>
<dbReference type="EMDB" id="EMD-12745"/>
<dbReference type="EMDB" id="EMD-14927"/>
<dbReference type="EMDB" id="EMD-14928"/>
<dbReference type="EMDB" id="EMD-14929"/>
<dbReference type="EMDB" id="EMD-16610"/>
<dbReference type="EMDB" id="EMD-16611"/>
<dbReference type="EMDB" id="EMD-3846"/>
<dbReference type="EMDB" id="EMD-3850"/>
<dbReference type="EMDB" id="EMD-42437"/>
<dbReference type="EMDB" id="EMD-42438"/>
<dbReference type="SMR" id="P36145"/>
<dbReference type="BioGRID" id="34193">
    <property type="interactions" value="215"/>
</dbReference>
<dbReference type="ComplexPortal" id="CPX-1658">
    <property type="entry name" value="General transcription factor complex TFIIE"/>
</dbReference>
<dbReference type="DIP" id="DIP-1701N"/>
<dbReference type="FunCoup" id="P36145">
    <property type="interactions" value="570"/>
</dbReference>
<dbReference type="IntAct" id="P36145">
    <property type="interactions" value="18"/>
</dbReference>
<dbReference type="MINT" id="P36145"/>
<dbReference type="STRING" id="4932.YKR062W"/>
<dbReference type="iPTMnet" id="P36145"/>
<dbReference type="PaxDb" id="4932-YKR062W"/>
<dbReference type="PeptideAtlas" id="P36145"/>
<dbReference type="EnsemblFungi" id="YKR062W_mRNA">
    <property type="protein sequence ID" value="YKR062W"/>
    <property type="gene ID" value="YKR062W"/>
</dbReference>
<dbReference type="GeneID" id="853936"/>
<dbReference type="KEGG" id="sce:YKR062W"/>
<dbReference type="AGR" id="SGD:S000001770"/>
<dbReference type="SGD" id="S000001770">
    <property type="gene designation" value="TFA2"/>
</dbReference>
<dbReference type="VEuPathDB" id="FungiDB:YKR062W"/>
<dbReference type="eggNOG" id="KOG3095">
    <property type="taxonomic scope" value="Eukaryota"/>
</dbReference>
<dbReference type="GeneTree" id="ENSGT00390000011749"/>
<dbReference type="HOGENOM" id="CLU_056580_2_0_1"/>
<dbReference type="InParanoid" id="P36145"/>
<dbReference type="OMA" id="RTKKDNH"/>
<dbReference type="OrthoDB" id="5323195at2759"/>
<dbReference type="BioCyc" id="YEAST:G3O-32030-MONOMER"/>
<dbReference type="Reactome" id="R-SCE-674695">
    <property type="pathway name" value="RNA Polymerase II Pre-transcription Events"/>
</dbReference>
<dbReference type="Reactome" id="R-SCE-6807505">
    <property type="pathway name" value="RNA polymerase II transcribes snRNA genes"/>
</dbReference>
<dbReference type="Reactome" id="R-SCE-73776">
    <property type="pathway name" value="RNA Polymerase II Promoter Escape"/>
</dbReference>
<dbReference type="Reactome" id="R-SCE-73779">
    <property type="pathway name" value="RNA Polymerase II Transcription Pre-Initiation And Promoter Opening"/>
</dbReference>
<dbReference type="Reactome" id="R-SCE-75953">
    <property type="pathway name" value="RNA Polymerase II Transcription Initiation"/>
</dbReference>
<dbReference type="Reactome" id="R-SCE-76042">
    <property type="pathway name" value="RNA Polymerase II Transcription Initiation And Promoter Clearance"/>
</dbReference>
<dbReference type="BioGRID-ORCS" id="853936">
    <property type="hits" value="3 hits in 10 CRISPR screens"/>
</dbReference>
<dbReference type="EvolutionaryTrace" id="P36145"/>
<dbReference type="PRO" id="PR:P36145"/>
<dbReference type="Proteomes" id="UP000002311">
    <property type="component" value="Chromosome XI"/>
</dbReference>
<dbReference type="RNAct" id="P36145">
    <property type="molecule type" value="protein"/>
</dbReference>
<dbReference type="GO" id="GO:0005634">
    <property type="term" value="C:nucleus"/>
    <property type="evidence" value="ECO:0000314"/>
    <property type="project" value="ComplexPortal"/>
</dbReference>
<dbReference type="GO" id="GO:0005673">
    <property type="term" value="C:transcription factor TFIIE complex"/>
    <property type="evidence" value="ECO:0000314"/>
    <property type="project" value="SGD"/>
</dbReference>
<dbReference type="GO" id="GO:0097550">
    <property type="term" value="C:transcription preinitiation complex"/>
    <property type="evidence" value="ECO:0000314"/>
    <property type="project" value="SGD"/>
</dbReference>
<dbReference type="GO" id="GO:0003677">
    <property type="term" value="F:DNA binding"/>
    <property type="evidence" value="ECO:0007669"/>
    <property type="project" value="UniProtKB-KW"/>
</dbReference>
<dbReference type="GO" id="GO:0006366">
    <property type="term" value="P:transcription by RNA polymerase II"/>
    <property type="evidence" value="ECO:0000314"/>
    <property type="project" value="SGD"/>
</dbReference>
<dbReference type="GO" id="GO:0006367">
    <property type="term" value="P:transcription initiation at RNA polymerase II promoter"/>
    <property type="evidence" value="ECO:0000314"/>
    <property type="project" value="ComplexPortal"/>
</dbReference>
<dbReference type="CDD" id="cd07977">
    <property type="entry name" value="TFIIE_beta_winged_helix"/>
    <property type="match status" value="1"/>
</dbReference>
<dbReference type="InterPro" id="IPR054600">
    <property type="entry name" value="TFA2_E-tether"/>
</dbReference>
<dbReference type="InterPro" id="IPR040501">
    <property type="entry name" value="TFA2_Winged_2"/>
</dbReference>
<dbReference type="InterPro" id="IPR016656">
    <property type="entry name" value="TFIIE-bsu"/>
</dbReference>
<dbReference type="InterPro" id="IPR003166">
    <property type="entry name" value="TFIIE_bsu_DNA-bd"/>
</dbReference>
<dbReference type="PANTHER" id="PTHR12716:SF8">
    <property type="entry name" value="TRANSCRIPTION INITIATION FACTOR IIE SUBUNIT BETA"/>
    <property type="match status" value="1"/>
</dbReference>
<dbReference type="PANTHER" id="PTHR12716">
    <property type="entry name" value="TRANSCRIPTION INITIATION FACTOR IIE, BETA SUBUNIT"/>
    <property type="match status" value="1"/>
</dbReference>
<dbReference type="Pfam" id="PF22254">
    <property type="entry name" value="TFA2_E-tether"/>
    <property type="match status" value="1"/>
</dbReference>
<dbReference type="Pfam" id="PF18121">
    <property type="entry name" value="TFA2_Winged_2"/>
    <property type="match status" value="1"/>
</dbReference>
<dbReference type="Pfam" id="PF02186">
    <property type="entry name" value="TFIIE_beta"/>
    <property type="match status" value="1"/>
</dbReference>
<dbReference type="PIRSF" id="PIRSF016398">
    <property type="entry name" value="TFIIE-beta"/>
    <property type="match status" value="1"/>
</dbReference>
<dbReference type="PROSITE" id="PS51351">
    <property type="entry name" value="TFIIE_BETA_C"/>
    <property type="match status" value="1"/>
</dbReference>
<keyword id="KW-0002">3D-structure</keyword>
<keyword id="KW-0903">Direct protein sequencing</keyword>
<keyword id="KW-0238">DNA-binding</keyword>
<keyword id="KW-0539">Nucleus</keyword>
<keyword id="KW-0597">Phosphoprotein</keyword>
<keyword id="KW-1185">Reference proteome</keyword>
<keyword id="KW-0804">Transcription</keyword>
<keyword id="KW-0805">Transcription regulation</keyword>
<organism>
    <name type="scientific">Saccharomyces cerevisiae (strain ATCC 204508 / S288c)</name>
    <name type="common">Baker's yeast</name>
    <dbReference type="NCBI Taxonomy" id="559292"/>
    <lineage>
        <taxon>Eukaryota</taxon>
        <taxon>Fungi</taxon>
        <taxon>Dikarya</taxon>
        <taxon>Ascomycota</taxon>
        <taxon>Saccharomycotina</taxon>
        <taxon>Saccharomycetes</taxon>
        <taxon>Saccharomycetales</taxon>
        <taxon>Saccharomycetaceae</taxon>
        <taxon>Saccharomyces</taxon>
    </lineage>
</organism>